<dbReference type="EMBL" id="AP009152">
    <property type="protein sequence ID" value="BAG29823.1"/>
    <property type="molecule type" value="Genomic_DNA"/>
</dbReference>
<dbReference type="RefSeq" id="WP_012398544.1">
    <property type="nucleotide sequence ID" value="NZ_VECX01000009.1"/>
</dbReference>
<dbReference type="SMR" id="B2GJP2"/>
<dbReference type="STRING" id="378753.KRH_14760"/>
<dbReference type="KEGG" id="krh:KRH_14760"/>
<dbReference type="eggNOG" id="COG1799">
    <property type="taxonomic scope" value="Bacteria"/>
</dbReference>
<dbReference type="HOGENOM" id="CLU_078499_0_0_11"/>
<dbReference type="OrthoDB" id="3731101at2"/>
<dbReference type="Proteomes" id="UP000008838">
    <property type="component" value="Chromosome"/>
</dbReference>
<dbReference type="GO" id="GO:0005737">
    <property type="term" value="C:cytoplasm"/>
    <property type="evidence" value="ECO:0007669"/>
    <property type="project" value="UniProtKB-SubCell"/>
</dbReference>
<dbReference type="GO" id="GO:0000917">
    <property type="term" value="P:division septum assembly"/>
    <property type="evidence" value="ECO:0007669"/>
    <property type="project" value="UniProtKB-KW"/>
</dbReference>
<dbReference type="GO" id="GO:0043093">
    <property type="term" value="P:FtsZ-dependent cytokinesis"/>
    <property type="evidence" value="ECO:0007669"/>
    <property type="project" value="UniProtKB-UniRule"/>
</dbReference>
<dbReference type="Gene3D" id="3.30.110.150">
    <property type="entry name" value="SepF-like protein"/>
    <property type="match status" value="1"/>
</dbReference>
<dbReference type="HAMAP" id="MF_01197">
    <property type="entry name" value="SepF"/>
    <property type="match status" value="1"/>
</dbReference>
<dbReference type="InterPro" id="IPR023052">
    <property type="entry name" value="Cell_div_SepF"/>
</dbReference>
<dbReference type="InterPro" id="IPR007561">
    <property type="entry name" value="Cell_div_SepF/SepF-rel"/>
</dbReference>
<dbReference type="InterPro" id="IPR038594">
    <property type="entry name" value="SepF-like_sf"/>
</dbReference>
<dbReference type="PANTHER" id="PTHR35798">
    <property type="entry name" value="CELL DIVISION PROTEIN SEPF"/>
    <property type="match status" value="1"/>
</dbReference>
<dbReference type="PANTHER" id="PTHR35798:SF1">
    <property type="entry name" value="CELL DIVISION PROTEIN SEPF"/>
    <property type="match status" value="1"/>
</dbReference>
<dbReference type="Pfam" id="PF04472">
    <property type="entry name" value="SepF"/>
    <property type="match status" value="1"/>
</dbReference>
<name>SEPF_KOCRD</name>
<keyword id="KW-0131">Cell cycle</keyword>
<keyword id="KW-0132">Cell division</keyword>
<keyword id="KW-0963">Cytoplasm</keyword>
<keyword id="KW-1185">Reference proteome</keyword>
<keyword id="KW-0717">Septation</keyword>
<reference key="1">
    <citation type="journal article" date="2008" name="J. Bacteriol.">
        <title>Complete genome sequence of the soil actinomycete Kocuria rhizophila.</title>
        <authorList>
            <person name="Takarada H."/>
            <person name="Sekine M."/>
            <person name="Kosugi H."/>
            <person name="Matsuo Y."/>
            <person name="Fujisawa T."/>
            <person name="Omata S."/>
            <person name="Kishi E."/>
            <person name="Shimizu A."/>
            <person name="Tsukatani N."/>
            <person name="Tanikawa S."/>
            <person name="Fujita N."/>
            <person name="Harayama S."/>
        </authorList>
    </citation>
    <scope>NUCLEOTIDE SEQUENCE [LARGE SCALE GENOMIC DNA]</scope>
    <source>
        <strain>ATCC 9341 / DSM 348 / NBRC 103217 / DC2201</strain>
    </source>
</reference>
<comment type="function">
    <text evidence="1">Cell division protein that is part of the divisome complex and is recruited early to the Z-ring. Probably stimulates Z-ring formation, perhaps through the cross-linking of FtsZ protofilaments. Its function overlaps with FtsA.</text>
</comment>
<comment type="subunit">
    <text evidence="1">Homodimer. Interacts with FtsZ.</text>
</comment>
<comment type="subcellular location">
    <subcellularLocation>
        <location evidence="1">Cytoplasm</location>
    </subcellularLocation>
    <text evidence="1">Localizes to the division site, in a FtsZ-dependent manner.</text>
</comment>
<comment type="similarity">
    <text evidence="1">Belongs to the SepF family.</text>
</comment>
<accession>B2GJP2</accession>
<feature type="chain" id="PRO_1000138469" description="Cell division protein SepF">
    <location>
        <begin position="1"/>
        <end position="173"/>
    </location>
</feature>
<feature type="region of interest" description="Disordered" evidence="2">
    <location>
        <begin position="17"/>
        <end position="85"/>
    </location>
</feature>
<feature type="compositionally biased region" description="Low complexity" evidence="2">
    <location>
        <begin position="35"/>
        <end position="52"/>
    </location>
</feature>
<sequence>MAGALRRTMVYLGLAESDDEYISDETPRPRDTPQSAGGSSAAVSESGSTSVARRSPEYRAPVTPIKRAPSSREDENELRTITTVHPRSYNDAKSIGEAFRDGTPVIMNVSDMGEAEAKRLVDFAAGLVFALHGSIERVTAKVFLLTPSFVEVRDQGHSDDIDEEPASLEQVEG</sequence>
<proteinExistence type="inferred from homology"/>
<evidence type="ECO:0000255" key="1">
    <source>
        <dbReference type="HAMAP-Rule" id="MF_01197"/>
    </source>
</evidence>
<evidence type="ECO:0000256" key="2">
    <source>
        <dbReference type="SAM" id="MobiDB-lite"/>
    </source>
</evidence>
<gene>
    <name evidence="1" type="primary">sepF</name>
    <name type="ordered locus">KRH_14760</name>
</gene>
<organism>
    <name type="scientific">Kocuria rhizophila (strain ATCC 9341 / DSM 348 / NBRC 103217 / DC2201)</name>
    <dbReference type="NCBI Taxonomy" id="378753"/>
    <lineage>
        <taxon>Bacteria</taxon>
        <taxon>Bacillati</taxon>
        <taxon>Actinomycetota</taxon>
        <taxon>Actinomycetes</taxon>
        <taxon>Micrococcales</taxon>
        <taxon>Micrococcaceae</taxon>
        <taxon>Kocuria</taxon>
    </lineage>
</organism>
<protein>
    <recommendedName>
        <fullName evidence="1">Cell division protein SepF</fullName>
    </recommendedName>
</protein>